<sequence>MKPKIFIDGEHGTTGLQIRTRLAERDDLEVISIPEAERRNKDLRADYLRAADIAILCLPDDASKEAVSLLEGHNSTRIIDTSTAHRVHPDWAYGFAELAKGQRERIAEARLVANPGCYPTGAIALVRPLRDAGLLPADYPVSVNAVSGYTGGGKQLIAQMEDRNHPDYLAANNFLYGLPLKHKHVPELQLHGRLDRRPIFSPSVGRFPQGMIVQVPLFLSELEGSPSLAKVHAVLTEHYAGQDIVEVVPLEESAKLPRVDAEELAGKDGMKLFVFGTEDHGQVNLVALLDNLGKGASGAAVQNMNLMLGK</sequence>
<protein>
    <recommendedName>
        <fullName evidence="1">N-acetyl-gamma-glutamyl-phosphate reductase</fullName>
        <shortName evidence="1">AGPR</shortName>
        <ecNumber evidence="1">1.2.1.38</ecNumber>
    </recommendedName>
    <alternativeName>
        <fullName evidence="1">N-acetyl-glutamate semialdehyde dehydrogenase</fullName>
        <shortName evidence="1">NAGSA dehydrogenase</shortName>
    </alternativeName>
</protein>
<reference key="1">
    <citation type="submission" date="2007-10" db="EMBL/GenBank/DDBJ databases">
        <title>Brucella canis ATCC 23365 whole genome shotgun sequencing project.</title>
        <authorList>
            <person name="Setubal J.C."/>
            <person name="Bowns C."/>
            <person name="Boyle S."/>
            <person name="Crasta O.R."/>
            <person name="Czar M.J."/>
            <person name="Dharmanolla C."/>
            <person name="Gillespie J.J."/>
            <person name="Kenyon R.W."/>
            <person name="Lu J."/>
            <person name="Mane S."/>
            <person name="Mohapatra S."/>
            <person name="Nagrani S."/>
            <person name="Purkayastha A."/>
            <person name="Rajasimha H.K."/>
            <person name="Shallom J.M."/>
            <person name="Shallom S."/>
            <person name="Shukla M."/>
            <person name="Snyder E.E."/>
            <person name="Sobral B.W."/>
            <person name="Wattam A.R."/>
            <person name="Will R."/>
            <person name="Williams K."/>
            <person name="Yoo H."/>
            <person name="Bruce D."/>
            <person name="Detter C."/>
            <person name="Munk C."/>
            <person name="Brettin T.S."/>
        </authorList>
    </citation>
    <scope>NUCLEOTIDE SEQUENCE [LARGE SCALE GENOMIC DNA]</scope>
    <source>
        <strain>ATCC 23365 / NCTC 10854 / RM-666</strain>
    </source>
</reference>
<organism>
    <name type="scientific">Brucella canis (strain ATCC 23365 / NCTC 10854 / RM-666)</name>
    <dbReference type="NCBI Taxonomy" id="483179"/>
    <lineage>
        <taxon>Bacteria</taxon>
        <taxon>Pseudomonadati</taxon>
        <taxon>Pseudomonadota</taxon>
        <taxon>Alphaproteobacteria</taxon>
        <taxon>Hyphomicrobiales</taxon>
        <taxon>Brucellaceae</taxon>
        <taxon>Brucella/Ochrobactrum group</taxon>
        <taxon>Brucella</taxon>
    </lineage>
</organism>
<proteinExistence type="inferred from homology"/>
<accession>A9MAG5</accession>
<comment type="function">
    <text evidence="1">Catalyzes the NADPH-dependent reduction of N-acetyl-5-glutamyl phosphate to yield N-acetyl-L-glutamate 5-semialdehyde.</text>
</comment>
<comment type="catalytic activity">
    <reaction evidence="1">
        <text>N-acetyl-L-glutamate 5-semialdehyde + phosphate + NADP(+) = N-acetyl-L-glutamyl 5-phosphate + NADPH + H(+)</text>
        <dbReference type="Rhea" id="RHEA:21588"/>
        <dbReference type="ChEBI" id="CHEBI:15378"/>
        <dbReference type="ChEBI" id="CHEBI:29123"/>
        <dbReference type="ChEBI" id="CHEBI:43474"/>
        <dbReference type="ChEBI" id="CHEBI:57783"/>
        <dbReference type="ChEBI" id="CHEBI:57936"/>
        <dbReference type="ChEBI" id="CHEBI:58349"/>
        <dbReference type="EC" id="1.2.1.38"/>
    </reaction>
</comment>
<comment type="pathway">
    <text evidence="1">Amino-acid biosynthesis; L-arginine biosynthesis; N(2)-acetyl-L-ornithine from L-glutamate: step 3/4.</text>
</comment>
<comment type="subcellular location">
    <subcellularLocation>
        <location evidence="1">Cytoplasm</location>
    </subcellularLocation>
</comment>
<comment type="similarity">
    <text evidence="1">Belongs to the NAGSA dehydrogenase family. Type 2 subfamily.</text>
</comment>
<keyword id="KW-0028">Amino-acid biosynthesis</keyword>
<keyword id="KW-0055">Arginine biosynthesis</keyword>
<keyword id="KW-0963">Cytoplasm</keyword>
<keyword id="KW-0521">NADP</keyword>
<keyword id="KW-0560">Oxidoreductase</keyword>
<keyword id="KW-1185">Reference proteome</keyword>
<gene>
    <name evidence="1" type="primary">argC</name>
    <name type="ordered locus">BCAN_A0801</name>
</gene>
<dbReference type="EC" id="1.2.1.38" evidence="1"/>
<dbReference type="EMBL" id="CP000872">
    <property type="protein sequence ID" value="ABX61868.1"/>
    <property type="molecule type" value="Genomic_DNA"/>
</dbReference>
<dbReference type="RefSeq" id="WP_002963923.1">
    <property type="nucleotide sequence ID" value="NC_010103.1"/>
</dbReference>
<dbReference type="SMR" id="A9MAG5"/>
<dbReference type="GeneID" id="93016823"/>
<dbReference type="KEGG" id="bcs:BCAN_A0801"/>
<dbReference type="HOGENOM" id="CLU_077118_0_0_5"/>
<dbReference type="PhylomeDB" id="A9MAG5"/>
<dbReference type="UniPathway" id="UPA00068">
    <property type="reaction ID" value="UER00108"/>
</dbReference>
<dbReference type="Proteomes" id="UP000001385">
    <property type="component" value="Chromosome I"/>
</dbReference>
<dbReference type="GO" id="GO:0005737">
    <property type="term" value="C:cytoplasm"/>
    <property type="evidence" value="ECO:0007669"/>
    <property type="project" value="UniProtKB-SubCell"/>
</dbReference>
<dbReference type="GO" id="GO:0003942">
    <property type="term" value="F:N-acetyl-gamma-glutamyl-phosphate reductase activity"/>
    <property type="evidence" value="ECO:0007669"/>
    <property type="project" value="UniProtKB-UniRule"/>
</dbReference>
<dbReference type="GO" id="GO:0051287">
    <property type="term" value="F:NAD binding"/>
    <property type="evidence" value="ECO:0007669"/>
    <property type="project" value="InterPro"/>
</dbReference>
<dbReference type="GO" id="GO:0006526">
    <property type="term" value="P:L-arginine biosynthetic process"/>
    <property type="evidence" value="ECO:0007669"/>
    <property type="project" value="UniProtKB-UniRule"/>
</dbReference>
<dbReference type="CDD" id="cd23935">
    <property type="entry name" value="AGPR_2_C"/>
    <property type="match status" value="1"/>
</dbReference>
<dbReference type="CDD" id="cd17896">
    <property type="entry name" value="AGPR_2_N"/>
    <property type="match status" value="1"/>
</dbReference>
<dbReference type="Gene3D" id="3.30.360.10">
    <property type="entry name" value="Dihydrodipicolinate Reductase, domain 2"/>
    <property type="match status" value="1"/>
</dbReference>
<dbReference type="Gene3D" id="3.40.50.720">
    <property type="entry name" value="NAD(P)-binding Rossmann-like Domain"/>
    <property type="match status" value="1"/>
</dbReference>
<dbReference type="HAMAP" id="MF_01110">
    <property type="entry name" value="ArgC_type2"/>
    <property type="match status" value="1"/>
</dbReference>
<dbReference type="InterPro" id="IPR023013">
    <property type="entry name" value="AGPR_AS"/>
</dbReference>
<dbReference type="InterPro" id="IPR010136">
    <property type="entry name" value="AGPR_type-2"/>
</dbReference>
<dbReference type="InterPro" id="IPR036291">
    <property type="entry name" value="NAD(P)-bd_dom_sf"/>
</dbReference>
<dbReference type="InterPro" id="IPR050085">
    <property type="entry name" value="NAGSA_dehydrogenase"/>
</dbReference>
<dbReference type="InterPro" id="IPR000534">
    <property type="entry name" value="Semialdehyde_DH_NAD-bd"/>
</dbReference>
<dbReference type="NCBIfam" id="TIGR01851">
    <property type="entry name" value="argC_other"/>
    <property type="match status" value="1"/>
</dbReference>
<dbReference type="PANTHER" id="PTHR32338:SF10">
    <property type="entry name" value="N-ACETYL-GAMMA-GLUTAMYL-PHOSPHATE REDUCTASE, CHLOROPLASTIC-RELATED"/>
    <property type="match status" value="1"/>
</dbReference>
<dbReference type="PANTHER" id="PTHR32338">
    <property type="entry name" value="N-ACETYL-GAMMA-GLUTAMYL-PHOSPHATE REDUCTASE, CHLOROPLASTIC-RELATED-RELATED"/>
    <property type="match status" value="1"/>
</dbReference>
<dbReference type="Pfam" id="PF01118">
    <property type="entry name" value="Semialdhyde_dh"/>
    <property type="match status" value="1"/>
</dbReference>
<dbReference type="Pfam" id="PF22698">
    <property type="entry name" value="Semialdhyde_dhC_1"/>
    <property type="match status" value="1"/>
</dbReference>
<dbReference type="SMART" id="SM00859">
    <property type="entry name" value="Semialdhyde_dh"/>
    <property type="match status" value="1"/>
</dbReference>
<dbReference type="SUPFAM" id="SSF55347">
    <property type="entry name" value="Glyceraldehyde-3-phosphate dehydrogenase-like, C-terminal domain"/>
    <property type="match status" value="1"/>
</dbReference>
<dbReference type="SUPFAM" id="SSF51735">
    <property type="entry name" value="NAD(P)-binding Rossmann-fold domains"/>
    <property type="match status" value="1"/>
</dbReference>
<dbReference type="PROSITE" id="PS01224">
    <property type="entry name" value="ARGC"/>
    <property type="match status" value="1"/>
</dbReference>
<feature type="chain" id="PRO_1000084868" description="N-acetyl-gamma-glutamyl-phosphate reductase">
    <location>
        <begin position="1"/>
        <end position="310"/>
    </location>
</feature>
<feature type="active site" evidence="1">
    <location>
        <position position="117"/>
    </location>
</feature>
<name>ARGC_BRUC2</name>
<evidence type="ECO:0000255" key="1">
    <source>
        <dbReference type="HAMAP-Rule" id="MF_01110"/>
    </source>
</evidence>